<accession>Q8RUD6</accession>
<accession>Q0WSX5</accession>
<accession>Q7Y234</accession>
<name>HARC1_ARATH</name>
<reference key="1">
    <citation type="journal article" date="1999" name="Nature">
        <title>Sequence and analysis of chromosome 2 of the plant Arabidopsis thaliana.</title>
        <authorList>
            <person name="Lin X."/>
            <person name="Kaul S."/>
            <person name="Rounsley S.D."/>
            <person name="Shea T.P."/>
            <person name="Benito M.-I."/>
            <person name="Town C.D."/>
            <person name="Fujii C.Y."/>
            <person name="Mason T.M."/>
            <person name="Bowman C.L."/>
            <person name="Barnstead M.E."/>
            <person name="Feldblyum T.V."/>
            <person name="Buell C.R."/>
            <person name="Ketchum K.A."/>
            <person name="Lee J.J."/>
            <person name="Ronning C.M."/>
            <person name="Koo H.L."/>
            <person name="Moffat K.S."/>
            <person name="Cronin L.A."/>
            <person name="Shen M."/>
            <person name="Pai G."/>
            <person name="Van Aken S."/>
            <person name="Umayam L."/>
            <person name="Tallon L.J."/>
            <person name="Gill J.E."/>
            <person name="Adams M.D."/>
            <person name="Carrera A.J."/>
            <person name="Creasy T.H."/>
            <person name="Goodman H.M."/>
            <person name="Somerville C.R."/>
            <person name="Copenhaver G.P."/>
            <person name="Preuss D."/>
            <person name="Nierman W.C."/>
            <person name="White O."/>
            <person name="Eisen J.A."/>
            <person name="Salzberg S.L."/>
            <person name="Fraser C.M."/>
            <person name="Venter J.C."/>
        </authorList>
    </citation>
    <scope>NUCLEOTIDE SEQUENCE [LARGE SCALE GENOMIC DNA]</scope>
    <source>
        <strain>cv. Columbia</strain>
    </source>
</reference>
<reference key="2">
    <citation type="journal article" date="2017" name="Plant J.">
        <title>Araport11: a complete reannotation of the Arabidopsis thaliana reference genome.</title>
        <authorList>
            <person name="Cheng C.Y."/>
            <person name="Krishnakumar V."/>
            <person name="Chan A.P."/>
            <person name="Thibaud-Nissen F."/>
            <person name="Schobel S."/>
            <person name="Town C.D."/>
        </authorList>
    </citation>
    <scope>GENOME REANNOTATION</scope>
    <source>
        <strain>cv. Columbia</strain>
    </source>
</reference>
<reference key="3">
    <citation type="submission" date="2006-07" db="EMBL/GenBank/DDBJ databases">
        <title>Large-scale analysis of RIKEN Arabidopsis full-length (RAFL) cDNAs.</title>
        <authorList>
            <person name="Totoki Y."/>
            <person name="Seki M."/>
            <person name="Ishida J."/>
            <person name="Nakajima M."/>
            <person name="Enju A."/>
            <person name="Kamiya A."/>
            <person name="Narusaka M."/>
            <person name="Shin-i T."/>
            <person name="Nakagawa M."/>
            <person name="Sakamoto N."/>
            <person name="Oishi K."/>
            <person name="Kohara Y."/>
            <person name="Kobayashi M."/>
            <person name="Toyoda A."/>
            <person name="Sakaki Y."/>
            <person name="Sakurai T."/>
            <person name="Iida K."/>
            <person name="Akiyama K."/>
            <person name="Satou M."/>
            <person name="Toyoda T."/>
            <person name="Konagaya A."/>
            <person name="Carninci P."/>
            <person name="Kawai J."/>
            <person name="Hayashizaki Y."/>
            <person name="Shinozaki K."/>
        </authorList>
    </citation>
    <scope>NUCLEOTIDE SEQUENCE [LARGE SCALE MRNA] OF 13-169</scope>
    <source>
        <strain>cv. Columbia</strain>
    </source>
</reference>
<reference key="4">
    <citation type="journal article" date="2003" name="Science">
        <title>Empirical analysis of transcriptional activity in the Arabidopsis genome.</title>
        <authorList>
            <person name="Yamada K."/>
            <person name="Lim J."/>
            <person name="Dale J.M."/>
            <person name="Chen H."/>
            <person name="Shinn P."/>
            <person name="Palm C.J."/>
            <person name="Southwick A.M."/>
            <person name="Wu H.C."/>
            <person name="Kim C.J."/>
            <person name="Nguyen M."/>
            <person name="Pham P.K."/>
            <person name="Cheuk R.F."/>
            <person name="Karlin-Newmann G."/>
            <person name="Liu S.X."/>
            <person name="Lam B."/>
            <person name="Sakano H."/>
            <person name="Wu T."/>
            <person name="Yu G."/>
            <person name="Miranda M."/>
            <person name="Quach H.L."/>
            <person name="Tripp M."/>
            <person name="Chang C.H."/>
            <person name="Lee J.M."/>
            <person name="Toriumi M.J."/>
            <person name="Chan M.M."/>
            <person name="Tang C.C."/>
            <person name="Onodera C.S."/>
            <person name="Deng J.M."/>
            <person name="Akiyama K."/>
            <person name="Ansari Y."/>
            <person name="Arakawa T."/>
            <person name="Banh J."/>
            <person name="Banno F."/>
            <person name="Bowser L."/>
            <person name="Brooks S.Y."/>
            <person name="Carninci P."/>
            <person name="Chao Q."/>
            <person name="Choy N."/>
            <person name="Enju A."/>
            <person name="Goldsmith A.D."/>
            <person name="Gurjal M."/>
            <person name="Hansen N.F."/>
            <person name="Hayashizaki Y."/>
            <person name="Johnson-Hopson C."/>
            <person name="Hsuan V.W."/>
            <person name="Iida K."/>
            <person name="Karnes M."/>
            <person name="Khan S."/>
            <person name="Koesema E."/>
            <person name="Ishida J."/>
            <person name="Jiang P.X."/>
            <person name="Jones T."/>
            <person name="Kawai J."/>
            <person name="Kamiya A."/>
            <person name="Meyers C."/>
            <person name="Nakajima M."/>
            <person name="Narusaka M."/>
            <person name="Seki M."/>
            <person name="Sakurai T."/>
            <person name="Satou M."/>
            <person name="Tamse R."/>
            <person name="Vaysberg M."/>
            <person name="Wallender E.K."/>
            <person name="Wong C."/>
            <person name="Yamamura Y."/>
            <person name="Yuan S."/>
            <person name="Shinozaki K."/>
            <person name="Davis R.W."/>
            <person name="Theologis A."/>
            <person name="Ecker J.R."/>
        </authorList>
    </citation>
    <scope>NUCLEOTIDE SEQUENCE [LARGE SCALE MRNA] OF 30-169</scope>
    <source>
        <strain>cv. Columbia</strain>
    </source>
</reference>
<reference key="5">
    <citation type="journal article" date="2007" name="Plant Physiol. Biochem.">
        <title>Differential expression of Arabidopsis sulfurtransferases under various growth conditions.</title>
        <authorList>
            <person name="Bartels A."/>
            <person name="Mock H.P."/>
            <person name="Papenbrock J."/>
        </authorList>
    </citation>
    <scope>GENE FAMILY</scope>
    <scope>NOMENCLATURE</scope>
</reference>
<reference key="6">
    <citation type="journal article" date="2014" name="Nat. Commun.">
        <title>Natural variation in arsenate tolerance identifies an arsenate reductase in Arabidopsis thaliana.</title>
        <authorList>
            <person name="Sanchez-Bermejo E."/>
            <person name="Castrillo G."/>
            <person name="del Llano B."/>
            <person name="Navarro C."/>
            <person name="Zarco-Fernandez S."/>
            <person name="Martinez-Herrera D.J."/>
            <person name="Leo-del Puerto Y."/>
            <person name="Munoz R."/>
            <person name="Camara C."/>
            <person name="Paz-Ares J."/>
            <person name="Alonso-Blanco C."/>
            <person name="Leyva A."/>
        </authorList>
    </citation>
    <scope>FUNCTION</scope>
    <scope>ACTIVITY REGULATION</scope>
    <scope>MUTAGENESIS OF CYS-113</scope>
    <scope>3D-STRUCTURE MODELING</scope>
</reference>
<reference key="7">
    <citation type="journal article" date="2014" name="PLoS Biol.">
        <title>Genome-wide association mapping identifies a new arsenate reductase enzyme critical for limiting arsenic accumulation in plants.</title>
        <authorList>
            <person name="Chao D.Y."/>
            <person name="Chen Y."/>
            <person name="Chen J."/>
            <person name="Shi S."/>
            <person name="Chen Z."/>
            <person name="Wang C."/>
            <person name="Danku J.M."/>
            <person name="Zhao F.J."/>
            <person name="Salt D.E."/>
        </authorList>
    </citation>
    <scope>FUNCTION</scope>
    <scope>CATALYTIC ACTIVITY</scope>
    <scope>DISRUPTION PHENOTYPE</scope>
    <scope>TISSUE SPECIFICITY</scope>
    <scope>INDUCTION</scope>
</reference>
<keyword id="KW-0496">Mitochondrion</keyword>
<keyword id="KW-0560">Oxidoreductase</keyword>
<keyword id="KW-1185">Reference proteome</keyword>
<keyword id="KW-0677">Repeat</keyword>
<keyword id="KW-0809">Transit peptide</keyword>
<gene>
    <name evidence="7" type="primary">HAC1</name>
    <name evidence="6" type="synonym">ATQ1</name>
    <name evidence="5" type="synonym">STR19</name>
    <name evidence="9" type="ordered locus">At2g21045</name>
    <name evidence="11" type="ORF">F26H11</name>
    <name evidence="10" type="ORF">F5H14</name>
</gene>
<organism>
    <name type="scientific">Arabidopsis thaliana</name>
    <name type="common">Mouse-ear cress</name>
    <dbReference type="NCBI Taxonomy" id="3702"/>
    <lineage>
        <taxon>Eukaryota</taxon>
        <taxon>Viridiplantae</taxon>
        <taxon>Streptophyta</taxon>
        <taxon>Embryophyta</taxon>
        <taxon>Tracheophyta</taxon>
        <taxon>Spermatophyta</taxon>
        <taxon>Magnoliopsida</taxon>
        <taxon>eudicotyledons</taxon>
        <taxon>Gunneridae</taxon>
        <taxon>Pentapetalae</taxon>
        <taxon>rosids</taxon>
        <taxon>malvids</taxon>
        <taxon>Brassicales</taxon>
        <taxon>Brassicaceae</taxon>
        <taxon>Camelineae</taxon>
        <taxon>Arabidopsis</taxon>
    </lineage>
</organism>
<comment type="function">
    <text evidence="3 4">Arsenate reductase critical for arsenic tolerance (PubMed:25099865). Reduces arsenate to arsenite in the root, facilitating efflux of arsenic back into the soil to limit both its accumulation in the root and transport to the shoot (PubMed:25464340). Essential for arsenite efflux from the root, but not necessary for arsenate uptake (PubMed:25464340).</text>
</comment>
<comment type="catalytic activity">
    <reaction evidence="4">
        <text>[glutaredoxin]-dithiol + arsenate + glutathione + H(+) = glutathionyl-S-S-[glutaredoxin] + arsenite + H2O</text>
        <dbReference type="Rhea" id="RHEA:22016"/>
        <dbReference type="Rhea" id="RHEA-COMP:10729"/>
        <dbReference type="Rhea" id="RHEA-COMP:17668"/>
        <dbReference type="ChEBI" id="CHEBI:15377"/>
        <dbReference type="ChEBI" id="CHEBI:15378"/>
        <dbReference type="ChEBI" id="CHEBI:29242"/>
        <dbReference type="ChEBI" id="CHEBI:29950"/>
        <dbReference type="ChEBI" id="CHEBI:48597"/>
        <dbReference type="ChEBI" id="CHEBI:57925"/>
        <dbReference type="ChEBI" id="CHEBI:146199"/>
        <dbReference type="EC" id="1.20.4.1"/>
    </reaction>
</comment>
<comment type="activity regulation">
    <text evidence="3">Inhibited by trobenzenesulphonic acid (TNBS).</text>
</comment>
<comment type="subcellular location">
    <subcellularLocation>
        <location evidence="8">Mitochondrion</location>
    </subcellularLocation>
</comment>
<comment type="tissue specificity">
    <text evidence="4">Expressed in root hairs, epidermal cells at the surface of the root and in the pericycle within the stele.</text>
</comment>
<comment type="induction">
    <text evidence="4">Up-regulated by arsenate and down-regulated by arsenite.</text>
</comment>
<comment type="disruption phenotype">
    <text evidence="4">Reduced arsenate resistance and increased accumulation of arsenic in shoots and roots.</text>
</comment>
<proteinExistence type="evidence at protein level"/>
<protein>
    <recommendedName>
        <fullName evidence="7">Protein HIGH ARSENIC CONTENT 1, mitochondrial</fullName>
        <shortName evidence="7">AtHAC1</shortName>
    </recommendedName>
    <alternativeName>
        <fullName evidence="8">Arsenate reductase</fullName>
        <ecNumber evidence="4">1.20.4.1</ecNumber>
    </alternativeName>
    <alternativeName>
        <fullName evidence="6">Arsenate tolerance QTL1</fullName>
        <shortName evidence="6">AtATQ1</shortName>
    </alternativeName>
    <alternativeName>
        <fullName evidence="8">Rhodanese-like domain-containing protein 19</fullName>
    </alternativeName>
    <alternativeName>
        <fullName evidence="5">Sulfurtransferase 19</fullName>
        <shortName evidence="5">AtStr19</shortName>
    </alternativeName>
</protein>
<feature type="transit peptide" description="Mitochondrion" evidence="1">
    <location>
        <begin position="1"/>
        <end position="59"/>
    </location>
</feature>
<feature type="chain" id="PRO_0000416539" description="Protein HIGH ARSENIC CONTENT 1, mitochondrial">
    <location>
        <begin position="60"/>
        <end position="169"/>
    </location>
</feature>
<feature type="domain" description="Rhodanese" evidence="2">
    <location>
        <begin position="60"/>
        <end position="153"/>
    </location>
</feature>
<feature type="active site" description="Cysteine persulfide intermediate" evidence="2">
    <location>
        <position position="113"/>
    </location>
</feature>
<feature type="mutagenesis site" description="Loss of activity." evidence="3">
    <original>C</original>
    <variation>G</variation>
    <location>
        <position position="113"/>
    </location>
</feature>
<evidence type="ECO:0000255" key="1"/>
<evidence type="ECO:0000255" key="2">
    <source>
        <dbReference type="PROSITE-ProRule" id="PRU00173"/>
    </source>
</evidence>
<evidence type="ECO:0000269" key="3">
    <source>
    </source>
</evidence>
<evidence type="ECO:0000269" key="4">
    <source>
    </source>
</evidence>
<evidence type="ECO:0000303" key="5">
    <source>
    </source>
</evidence>
<evidence type="ECO:0000303" key="6">
    <source>
    </source>
</evidence>
<evidence type="ECO:0000303" key="7">
    <source>
    </source>
</evidence>
<evidence type="ECO:0000305" key="8"/>
<evidence type="ECO:0000312" key="9">
    <source>
        <dbReference type="Araport" id="AT2G21045"/>
    </source>
</evidence>
<evidence type="ECO:0000312" key="10">
    <source>
        <dbReference type="EMBL" id="AAM15209.1"/>
    </source>
</evidence>
<evidence type="ECO:0000312" key="11">
    <source>
        <dbReference type="EMBL" id="AAM15226.1"/>
    </source>
</evidence>
<sequence>MYTYSLLNLSHCRRQTRKKRKTDHTEGFLMEETKPKTVEDVETVDVYTAKGFLSTGHRYLDVRTNEEFAKSHVEEALNIPYMFKTDEGRVINPDFLSQVASVCKKDEHLIVACNAGGRGSRACVDLLNEGYDHVANMGGGYSAWVDAGFAGDKPPEDLKIACKFRPKEN</sequence>
<dbReference type="EC" id="1.20.4.1" evidence="4"/>
<dbReference type="EMBL" id="AC006234">
    <property type="protein sequence ID" value="AAM15209.1"/>
    <property type="molecule type" value="Genomic_DNA"/>
</dbReference>
<dbReference type="EMBL" id="AC006264">
    <property type="protein sequence ID" value="AAM15226.1"/>
    <property type="molecule type" value="Genomic_DNA"/>
</dbReference>
<dbReference type="EMBL" id="CP002685">
    <property type="protein sequence ID" value="AEC07115.1"/>
    <property type="molecule type" value="Genomic_DNA"/>
</dbReference>
<dbReference type="EMBL" id="AK227791">
    <property type="protein sequence ID" value="BAE99773.1"/>
    <property type="molecule type" value="mRNA"/>
</dbReference>
<dbReference type="EMBL" id="BT008306">
    <property type="protein sequence ID" value="AAP37665.1"/>
    <property type="molecule type" value="mRNA"/>
</dbReference>
<dbReference type="RefSeq" id="NP_565497.3">
    <property type="nucleotide sequence ID" value="NM_127674.5"/>
</dbReference>
<dbReference type="SMR" id="Q8RUD6"/>
<dbReference type="BioGRID" id="1992">
    <property type="interactions" value="1"/>
</dbReference>
<dbReference type="FunCoup" id="Q8RUD6">
    <property type="interactions" value="227"/>
</dbReference>
<dbReference type="STRING" id="3702.Q8RUD6"/>
<dbReference type="PaxDb" id="3702-AT2G21045.1"/>
<dbReference type="ProteomicsDB" id="230306"/>
<dbReference type="EnsemblPlants" id="AT2G21045.1">
    <property type="protein sequence ID" value="AT2G21045.1"/>
    <property type="gene ID" value="AT2G21045"/>
</dbReference>
<dbReference type="GeneID" id="816639"/>
<dbReference type="Gramene" id="AT2G21045.1">
    <property type="protein sequence ID" value="AT2G21045.1"/>
    <property type="gene ID" value="AT2G21045"/>
</dbReference>
<dbReference type="KEGG" id="ath:AT2G21045"/>
<dbReference type="Araport" id="AT2G21045"/>
<dbReference type="TAIR" id="AT2G21045">
    <property type="gene designation" value="HAC1"/>
</dbReference>
<dbReference type="eggNOG" id="KOG1530">
    <property type="taxonomic scope" value="Eukaryota"/>
</dbReference>
<dbReference type="HOGENOM" id="CLU_089574_3_0_1"/>
<dbReference type="InParanoid" id="Q8RUD6"/>
<dbReference type="OMA" id="HLVVGCN"/>
<dbReference type="PhylomeDB" id="Q8RUD6"/>
<dbReference type="BioCyc" id="MetaCyc:AT2G21045-MONOMER"/>
<dbReference type="PRO" id="PR:Q8RUD6"/>
<dbReference type="Proteomes" id="UP000006548">
    <property type="component" value="Chromosome 2"/>
</dbReference>
<dbReference type="ExpressionAtlas" id="Q8RUD6">
    <property type="expression patterns" value="baseline and differential"/>
</dbReference>
<dbReference type="GO" id="GO:0005737">
    <property type="term" value="C:cytoplasm"/>
    <property type="evidence" value="ECO:0000314"/>
    <property type="project" value="TAIR"/>
</dbReference>
<dbReference type="GO" id="GO:0005739">
    <property type="term" value="C:mitochondrion"/>
    <property type="evidence" value="ECO:0007669"/>
    <property type="project" value="UniProtKB-SubCell"/>
</dbReference>
<dbReference type="GO" id="GO:0005634">
    <property type="term" value="C:nucleus"/>
    <property type="evidence" value="ECO:0000314"/>
    <property type="project" value="TAIR"/>
</dbReference>
<dbReference type="GO" id="GO:0008794">
    <property type="term" value="F:arsenate reductase (glutaredoxin) activity"/>
    <property type="evidence" value="ECO:0007669"/>
    <property type="project" value="UniProtKB-EC"/>
</dbReference>
<dbReference type="GO" id="GO:0030611">
    <property type="term" value="F:arsenate reductase activity"/>
    <property type="evidence" value="ECO:0000314"/>
    <property type="project" value="TAIR"/>
</dbReference>
<dbReference type="GO" id="GO:0071722">
    <property type="term" value="P:detoxification of arsenic-containing substance"/>
    <property type="evidence" value="ECO:0000315"/>
    <property type="project" value="TAIR"/>
</dbReference>
<dbReference type="GO" id="GO:0046685">
    <property type="term" value="P:response to arsenic-containing substance"/>
    <property type="evidence" value="ECO:0000315"/>
    <property type="project" value="TAIR"/>
</dbReference>
<dbReference type="CDD" id="cd00158">
    <property type="entry name" value="RHOD"/>
    <property type="match status" value="1"/>
</dbReference>
<dbReference type="FunFam" id="3.40.250.10:FF:000062">
    <property type="entry name" value="Thiosulfate sulfurtransferase 16, chloroplastic"/>
    <property type="match status" value="1"/>
</dbReference>
<dbReference type="Gene3D" id="3.40.250.10">
    <property type="entry name" value="Rhodanese-like domain"/>
    <property type="match status" value="1"/>
</dbReference>
<dbReference type="InterPro" id="IPR001763">
    <property type="entry name" value="Rhodanese-like_dom"/>
</dbReference>
<dbReference type="InterPro" id="IPR036873">
    <property type="entry name" value="Rhodanese-like_dom_sf"/>
</dbReference>
<dbReference type="InterPro" id="IPR044684">
    <property type="entry name" value="STR17/STR18/HARC1-like"/>
</dbReference>
<dbReference type="PANTHER" id="PTHR44542:SF14">
    <property type="entry name" value="PROTEIN HIGH ARSENIC CONTENT 1, MITOCHONDRIAL-RELATED"/>
    <property type="match status" value="1"/>
</dbReference>
<dbReference type="PANTHER" id="PTHR44542">
    <property type="entry name" value="THIOSULFATE SULFURTRANSFERASE 18"/>
    <property type="match status" value="1"/>
</dbReference>
<dbReference type="Pfam" id="PF00581">
    <property type="entry name" value="Rhodanese"/>
    <property type="match status" value="1"/>
</dbReference>
<dbReference type="SMART" id="SM00450">
    <property type="entry name" value="RHOD"/>
    <property type="match status" value="1"/>
</dbReference>
<dbReference type="SUPFAM" id="SSF52821">
    <property type="entry name" value="Rhodanese/Cell cycle control phosphatase"/>
    <property type="match status" value="1"/>
</dbReference>
<dbReference type="PROSITE" id="PS50206">
    <property type="entry name" value="RHODANESE_3"/>
    <property type="match status" value="1"/>
</dbReference>